<evidence type="ECO:0000255" key="1">
    <source>
        <dbReference type="HAMAP-Rule" id="MF_01367"/>
    </source>
</evidence>
<evidence type="ECO:0000305" key="2"/>
<sequence>MIQTESYLDVADNSGARRVMCIKVLGGSHRRYAAVGDIIKVTVKEAIPRGKVKKGQVLKAVVVRTKKGVRRQDGSLIKFDDNAAVLLNNQDAPIGTRIFGPVTRELRGEKFMKIISLAPEVL</sequence>
<gene>
    <name evidence="1" type="primary">rplN</name>
    <name type="ordered locus">CJA_0709</name>
</gene>
<keyword id="KW-1185">Reference proteome</keyword>
<keyword id="KW-0687">Ribonucleoprotein</keyword>
<keyword id="KW-0689">Ribosomal protein</keyword>
<keyword id="KW-0694">RNA-binding</keyword>
<keyword id="KW-0699">rRNA-binding</keyword>
<proteinExistence type="inferred from homology"/>
<feature type="chain" id="PRO_1000144237" description="Large ribosomal subunit protein uL14">
    <location>
        <begin position="1"/>
        <end position="122"/>
    </location>
</feature>
<comment type="function">
    <text evidence="1">Binds to 23S rRNA. Forms part of two intersubunit bridges in the 70S ribosome.</text>
</comment>
<comment type="subunit">
    <text evidence="1">Part of the 50S ribosomal subunit. Forms a cluster with proteins L3 and L19. In the 70S ribosome, L14 and L19 interact and together make contacts with the 16S rRNA in bridges B5 and B8.</text>
</comment>
<comment type="similarity">
    <text evidence="1">Belongs to the universal ribosomal protein uL14 family.</text>
</comment>
<organism>
    <name type="scientific">Cellvibrio japonicus (strain Ueda107)</name>
    <name type="common">Pseudomonas fluorescens subsp. cellulosa</name>
    <dbReference type="NCBI Taxonomy" id="498211"/>
    <lineage>
        <taxon>Bacteria</taxon>
        <taxon>Pseudomonadati</taxon>
        <taxon>Pseudomonadota</taxon>
        <taxon>Gammaproteobacteria</taxon>
        <taxon>Cellvibrionales</taxon>
        <taxon>Cellvibrionaceae</taxon>
        <taxon>Cellvibrio</taxon>
    </lineage>
</organism>
<protein>
    <recommendedName>
        <fullName evidence="1">Large ribosomal subunit protein uL14</fullName>
    </recommendedName>
    <alternativeName>
        <fullName evidence="2">50S ribosomal protein L14</fullName>
    </alternativeName>
</protein>
<name>RL14_CELJU</name>
<accession>B3PK47</accession>
<reference key="1">
    <citation type="journal article" date="2008" name="J. Bacteriol.">
        <title>Insights into plant cell wall degradation from the genome sequence of the soil bacterium Cellvibrio japonicus.</title>
        <authorList>
            <person name="DeBoy R.T."/>
            <person name="Mongodin E.F."/>
            <person name="Fouts D.E."/>
            <person name="Tailford L.E."/>
            <person name="Khouri H."/>
            <person name="Emerson J.B."/>
            <person name="Mohamoud Y."/>
            <person name="Watkins K."/>
            <person name="Henrissat B."/>
            <person name="Gilbert H.J."/>
            <person name="Nelson K.E."/>
        </authorList>
    </citation>
    <scope>NUCLEOTIDE SEQUENCE [LARGE SCALE GENOMIC DNA]</scope>
    <source>
        <strain>Ueda107</strain>
    </source>
</reference>
<dbReference type="EMBL" id="CP000934">
    <property type="protein sequence ID" value="ACE85722.1"/>
    <property type="molecule type" value="Genomic_DNA"/>
</dbReference>
<dbReference type="RefSeq" id="WP_012486372.1">
    <property type="nucleotide sequence ID" value="NC_010995.1"/>
</dbReference>
<dbReference type="SMR" id="B3PK47"/>
<dbReference type="STRING" id="498211.CJA_0709"/>
<dbReference type="KEGG" id="cja:CJA_0709"/>
<dbReference type="eggNOG" id="COG0093">
    <property type="taxonomic scope" value="Bacteria"/>
</dbReference>
<dbReference type="HOGENOM" id="CLU_095071_2_1_6"/>
<dbReference type="OrthoDB" id="9806379at2"/>
<dbReference type="Proteomes" id="UP000001036">
    <property type="component" value="Chromosome"/>
</dbReference>
<dbReference type="GO" id="GO:0022625">
    <property type="term" value="C:cytosolic large ribosomal subunit"/>
    <property type="evidence" value="ECO:0007669"/>
    <property type="project" value="TreeGrafter"/>
</dbReference>
<dbReference type="GO" id="GO:0070180">
    <property type="term" value="F:large ribosomal subunit rRNA binding"/>
    <property type="evidence" value="ECO:0007669"/>
    <property type="project" value="TreeGrafter"/>
</dbReference>
<dbReference type="GO" id="GO:0003735">
    <property type="term" value="F:structural constituent of ribosome"/>
    <property type="evidence" value="ECO:0007669"/>
    <property type="project" value="InterPro"/>
</dbReference>
<dbReference type="GO" id="GO:0006412">
    <property type="term" value="P:translation"/>
    <property type="evidence" value="ECO:0007669"/>
    <property type="project" value="UniProtKB-UniRule"/>
</dbReference>
<dbReference type="CDD" id="cd00337">
    <property type="entry name" value="Ribosomal_uL14"/>
    <property type="match status" value="1"/>
</dbReference>
<dbReference type="FunFam" id="2.40.150.20:FF:000001">
    <property type="entry name" value="50S ribosomal protein L14"/>
    <property type="match status" value="1"/>
</dbReference>
<dbReference type="Gene3D" id="2.40.150.20">
    <property type="entry name" value="Ribosomal protein L14"/>
    <property type="match status" value="1"/>
</dbReference>
<dbReference type="HAMAP" id="MF_01367">
    <property type="entry name" value="Ribosomal_uL14"/>
    <property type="match status" value="1"/>
</dbReference>
<dbReference type="InterPro" id="IPR000218">
    <property type="entry name" value="Ribosomal_uL14"/>
</dbReference>
<dbReference type="InterPro" id="IPR005745">
    <property type="entry name" value="Ribosomal_uL14_bac-type"/>
</dbReference>
<dbReference type="InterPro" id="IPR019972">
    <property type="entry name" value="Ribosomal_uL14_CS"/>
</dbReference>
<dbReference type="InterPro" id="IPR036853">
    <property type="entry name" value="Ribosomal_uL14_sf"/>
</dbReference>
<dbReference type="NCBIfam" id="TIGR01067">
    <property type="entry name" value="rplN_bact"/>
    <property type="match status" value="1"/>
</dbReference>
<dbReference type="PANTHER" id="PTHR11761">
    <property type="entry name" value="50S/60S RIBOSOMAL PROTEIN L14/L23"/>
    <property type="match status" value="1"/>
</dbReference>
<dbReference type="PANTHER" id="PTHR11761:SF3">
    <property type="entry name" value="LARGE RIBOSOMAL SUBUNIT PROTEIN UL14M"/>
    <property type="match status" value="1"/>
</dbReference>
<dbReference type="Pfam" id="PF00238">
    <property type="entry name" value="Ribosomal_L14"/>
    <property type="match status" value="1"/>
</dbReference>
<dbReference type="SMART" id="SM01374">
    <property type="entry name" value="Ribosomal_L14"/>
    <property type="match status" value="1"/>
</dbReference>
<dbReference type="SUPFAM" id="SSF50193">
    <property type="entry name" value="Ribosomal protein L14"/>
    <property type="match status" value="1"/>
</dbReference>
<dbReference type="PROSITE" id="PS00049">
    <property type="entry name" value="RIBOSOMAL_L14"/>
    <property type="match status" value="1"/>
</dbReference>